<name>HUTI_SACEN</name>
<keyword id="KW-0963">Cytoplasm</keyword>
<keyword id="KW-0369">Histidine metabolism</keyword>
<keyword id="KW-0378">Hydrolase</keyword>
<keyword id="KW-0408">Iron</keyword>
<keyword id="KW-0479">Metal-binding</keyword>
<keyword id="KW-1185">Reference proteome</keyword>
<keyword id="KW-0862">Zinc</keyword>
<reference key="1">
    <citation type="journal article" date="2007" name="Nat. Biotechnol.">
        <title>Complete genome sequence of the erythromycin-producing bacterium Saccharopolyspora erythraea NRRL23338.</title>
        <authorList>
            <person name="Oliynyk M."/>
            <person name="Samborskyy M."/>
            <person name="Lester J.B."/>
            <person name="Mironenko T."/>
            <person name="Scott N."/>
            <person name="Dickens S."/>
            <person name="Haydock S.F."/>
            <person name="Leadlay P.F."/>
        </authorList>
    </citation>
    <scope>NUCLEOTIDE SEQUENCE [LARGE SCALE GENOMIC DNA]</scope>
    <source>
        <strain>ATCC 11635 / DSM 40517 / JCM 4748 / NBRC 13426 / NCIMB 8594 / NRRL 2338</strain>
    </source>
</reference>
<accession>A4FNE8</accession>
<proteinExistence type="inferred from homology"/>
<gene>
    <name evidence="1" type="primary">hutI</name>
    <name type="ordered locus">SACE_6403</name>
</gene>
<organism>
    <name type="scientific">Saccharopolyspora erythraea (strain ATCC 11635 / DSM 40517 / JCM 4748 / NBRC 13426 / NCIMB 8594 / NRRL 2338)</name>
    <dbReference type="NCBI Taxonomy" id="405948"/>
    <lineage>
        <taxon>Bacteria</taxon>
        <taxon>Bacillati</taxon>
        <taxon>Actinomycetota</taxon>
        <taxon>Actinomycetes</taxon>
        <taxon>Pseudonocardiales</taxon>
        <taxon>Pseudonocardiaceae</taxon>
        <taxon>Saccharopolyspora</taxon>
    </lineage>
</organism>
<evidence type="ECO:0000255" key="1">
    <source>
        <dbReference type="HAMAP-Rule" id="MF_00372"/>
    </source>
</evidence>
<dbReference type="EC" id="3.5.2.7" evidence="1"/>
<dbReference type="EMBL" id="AM420293">
    <property type="protein sequence ID" value="CAM05573.1"/>
    <property type="molecule type" value="Genomic_DNA"/>
</dbReference>
<dbReference type="RefSeq" id="WP_009945956.1">
    <property type="nucleotide sequence ID" value="NC_009142.1"/>
</dbReference>
<dbReference type="SMR" id="A4FNE8"/>
<dbReference type="STRING" id="405948.SACE_6403"/>
<dbReference type="KEGG" id="sen:SACE_6403"/>
<dbReference type="eggNOG" id="COG1228">
    <property type="taxonomic scope" value="Bacteria"/>
</dbReference>
<dbReference type="HOGENOM" id="CLU_041647_1_0_11"/>
<dbReference type="OrthoDB" id="9776455at2"/>
<dbReference type="UniPathway" id="UPA00379">
    <property type="reaction ID" value="UER00551"/>
</dbReference>
<dbReference type="Proteomes" id="UP000006728">
    <property type="component" value="Chromosome"/>
</dbReference>
<dbReference type="GO" id="GO:0005737">
    <property type="term" value="C:cytoplasm"/>
    <property type="evidence" value="ECO:0007669"/>
    <property type="project" value="UniProtKB-SubCell"/>
</dbReference>
<dbReference type="GO" id="GO:0050480">
    <property type="term" value="F:imidazolonepropionase activity"/>
    <property type="evidence" value="ECO:0007669"/>
    <property type="project" value="UniProtKB-UniRule"/>
</dbReference>
<dbReference type="GO" id="GO:0005506">
    <property type="term" value="F:iron ion binding"/>
    <property type="evidence" value="ECO:0007669"/>
    <property type="project" value="UniProtKB-UniRule"/>
</dbReference>
<dbReference type="GO" id="GO:0008270">
    <property type="term" value="F:zinc ion binding"/>
    <property type="evidence" value="ECO:0007669"/>
    <property type="project" value="UniProtKB-UniRule"/>
</dbReference>
<dbReference type="GO" id="GO:0019556">
    <property type="term" value="P:L-histidine catabolic process to glutamate and formamide"/>
    <property type="evidence" value="ECO:0007669"/>
    <property type="project" value="UniProtKB-UniPathway"/>
</dbReference>
<dbReference type="GO" id="GO:0019557">
    <property type="term" value="P:L-histidine catabolic process to glutamate and formate"/>
    <property type="evidence" value="ECO:0007669"/>
    <property type="project" value="UniProtKB-UniPathway"/>
</dbReference>
<dbReference type="Gene3D" id="3.20.20.140">
    <property type="entry name" value="Metal-dependent hydrolases"/>
    <property type="match status" value="1"/>
</dbReference>
<dbReference type="Gene3D" id="2.30.40.10">
    <property type="entry name" value="Urease, subunit C, domain 1"/>
    <property type="match status" value="1"/>
</dbReference>
<dbReference type="HAMAP" id="MF_00372">
    <property type="entry name" value="HutI"/>
    <property type="match status" value="1"/>
</dbReference>
<dbReference type="InterPro" id="IPR006680">
    <property type="entry name" value="Amidohydro-rel"/>
</dbReference>
<dbReference type="InterPro" id="IPR005920">
    <property type="entry name" value="HutI"/>
</dbReference>
<dbReference type="InterPro" id="IPR011059">
    <property type="entry name" value="Metal-dep_hydrolase_composite"/>
</dbReference>
<dbReference type="InterPro" id="IPR032466">
    <property type="entry name" value="Metal_Hydrolase"/>
</dbReference>
<dbReference type="NCBIfam" id="TIGR01224">
    <property type="entry name" value="hutI"/>
    <property type="match status" value="1"/>
</dbReference>
<dbReference type="PANTHER" id="PTHR42752">
    <property type="entry name" value="IMIDAZOLONEPROPIONASE"/>
    <property type="match status" value="1"/>
</dbReference>
<dbReference type="PANTHER" id="PTHR42752:SF1">
    <property type="entry name" value="IMIDAZOLONEPROPIONASE-RELATED"/>
    <property type="match status" value="1"/>
</dbReference>
<dbReference type="Pfam" id="PF01979">
    <property type="entry name" value="Amidohydro_1"/>
    <property type="match status" value="1"/>
</dbReference>
<dbReference type="SUPFAM" id="SSF51338">
    <property type="entry name" value="Composite domain of metallo-dependent hydrolases"/>
    <property type="match status" value="1"/>
</dbReference>
<dbReference type="SUPFAM" id="SSF51556">
    <property type="entry name" value="Metallo-dependent hydrolases"/>
    <property type="match status" value="1"/>
</dbReference>
<feature type="chain" id="PRO_0000306503" description="Imidazolonepropionase">
    <location>
        <begin position="1"/>
        <end position="388"/>
    </location>
</feature>
<feature type="binding site" evidence="1">
    <location>
        <position position="65"/>
    </location>
    <ligand>
        <name>Fe(3+)</name>
        <dbReference type="ChEBI" id="CHEBI:29034"/>
    </ligand>
</feature>
<feature type="binding site" evidence="1">
    <location>
        <position position="65"/>
    </location>
    <ligand>
        <name>Zn(2+)</name>
        <dbReference type="ChEBI" id="CHEBI:29105"/>
    </ligand>
</feature>
<feature type="binding site" evidence="1">
    <location>
        <position position="67"/>
    </location>
    <ligand>
        <name>Fe(3+)</name>
        <dbReference type="ChEBI" id="CHEBI:29034"/>
    </ligand>
</feature>
<feature type="binding site" evidence="1">
    <location>
        <position position="67"/>
    </location>
    <ligand>
        <name>Zn(2+)</name>
        <dbReference type="ChEBI" id="CHEBI:29105"/>
    </ligand>
</feature>
<feature type="binding site" evidence="1">
    <location>
        <position position="74"/>
    </location>
    <ligand>
        <name>4-imidazolone-5-propanoate</name>
        <dbReference type="ChEBI" id="CHEBI:77893"/>
    </ligand>
</feature>
<feature type="binding site" evidence="1">
    <location>
        <position position="132"/>
    </location>
    <ligand>
        <name>4-imidazolone-5-propanoate</name>
        <dbReference type="ChEBI" id="CHEBI:77893"/>
    </ligand>
</feature>
<feature type="binding site" evidence="1">
    <location>
        <position position="132"/>
    </location>
    <ligand>
        <name>N-formimidoyl-L-glutamate</name>
        <dbReference type="ChEBI" id="CHEBI:58928"/>
    </ligand>
</feature>
<feature type="binding site" evidence="1">
    <location>
        <position position="159"/>
    </location>
    <ligand>
        <name>4-imidazolone-5-propanoate</name>
        <dbReference type="ChEBI" id="CHEBI:77893"/>
    </ligand>
</feature>
<feature type="binding site" evidence="1">
    <location>
        <position position="220"/>
    </location>
    <ligand>
        <name>Fe(3+)</name>
        <dbReference type="ChEBI" id="CHEBI:29034"/>
    </ligand>
</feature>
<feature type="binding site" evidence="1">
    <location>
        <position position="220"/>
    </location>
    <ligand>
        <name>Zn(2+)</name>
        <dbReference type="ChEBI" id="CHEBI:29105"/>
    </ligand>
</feature>
<feature type="binding site" evidence="1">
    <location>
        <position position="296"/>
    </location>
    <ligand>
        <name>N-formimidoyl-L-glutamate</name>
        <dbReference type="ChEBI" id="CHEBI:58928"/>
    </ligand>
</feature>
<feature type="binding site" evidence="1">
    <location>
        <position position="298"/>
    </location>
    <ligand>
        <name>N-formimidoyl-L-glutamate</name>
        <dbReference type="ChEBI" id="CHEBI:58928"/>
    </ligand>
</feature>
<feature type="binding site" evidence="1">
    <location>
        <position position="299"/>
    </location>
    <ligand>
        <name>4-imidazolone-5-propanoate</name>
        <dbReference type="ChEBI" id="CHEBI:77893"/>
    </ligand>
</feature>
<protein>
    <recommendedName>
        <fullName evidence="1">Imidazolonepropionase</fullName>
        <ecNumber evidence="1">3.5.2.7</ecNumber>
    </recommendedName>
    <alternativeName>
        <fullName evidence="1">Imidazolone-5-propionate hydrolase</fullName>
    </alternativeName>
</protein>
<sequence>MTSTVITGIGELTTNDDELGKLTDAALVVEDGRIAWIGPSTAAPAADERFDAEGRAALPGWVDSHTHLVFAGDRTAEFAARMDGKPYEAGGIAVTVEATRAATDAELAANLRRHIAEAAAQGTTFVETKTGYGLTVADERRAAVVAAAEADEVTFLGAHLVPPGADADEYVDLVCGEMLDAVAPHVGWCDVFCEKGAFDADQSRRVLTAAAERGLGLRVHGNQLGTGPGVALAVELGAASVDHCTYLTQSDVDALAGSATVATLLPACDLSTRQPLPDARALLDAGATVALASNCNPGSSYTSSMGFCVTTAVLQMRMTVDEAIRAATWGGARALRREAGEDAVGVLRPGARADVQVLEAPSTAWLAYRPGVPLTHTVWRKGVRVTGR</sequence>
<comment type="function">
    <text evidence="1">Catalyzes the hydrolytic cleavage of the carbon-nitrogen bond in imidazolone-5-propanoate to yield N-formimidoyl-L-glutamate. It is the third step in the universal histidine degradation pathway.</text>
</comment>
<comment type="catalytic activity">
    <reaction evidence="1">
        <text>4-imidazolone-5-propanoate + H2O = N-formimidoyl-L-glutamate</text>
        <dbReference type="Rhea" id="RHEA:23660"/>
        <dbReference type="ChEBI" id="CHEBI:15377"/>
        <dbReference type="ChEBI" id="CHEBI:58928"/>
        <dbReference type="ChEBI" id="CHEBI:77893"/>
        <dbReference type="EC" id="3.5.2.7"/>
    </reaction>
</comment>
<comment type="cofactor">
    <cofactor evidence="1">
        <name>Zn(2+)</name>
        <dbReference type="ChEBI" id="CHEBI:29105"/>
    </cofactor>
    <cofactor evidence="1">
        <name>Fe(3+)</name>
        <dbReference type="ChEBI" id="CHEBI:29034"/>
    </cofactor>
    <text evidence="1">Binds 1 zinc or iron ion per subunit.</text>
</comment>
<comment type="pathway">
    <text evidence="1">Amino-acid degradation; L-histidine degradation into L-glutamate; N-formimidoyl-L-glutamate from L-histidine: step 3/3.</text>
</comment>
<comment type="subcellular location">
    <subcellularLocation>
        <location evidence="1">Cytoplasm</location>
    </subcellularLocation>
</comment>
<comment type="similarity">
    <text evidence="1">Belongs to the metallo-dependent hydrolases superfamily. HutI family.</text>
</comment>